<organism>
    <name type="scientific">Baumannia cicadellinicola subsp. Homalodisca coagulata</name>
    <dbReference type="NCBI Taxonomy" id="374463"/>
    <lineage>
        <taxon>Bacteria</taxon>
        <taxon>Pseudomonadati</taxon>
        <taxon>Pseudomonadota</taxon>
        <taxon>Gammaproteobacteria</taxon>
        <taxon>Candidatus Palibaumannia</taxon>
    </lineage>
</organism>
<keyword id="KW-1003">Cell membrane</keyword>
<keyword id="KW-0210">Decarboxylase</keyword>
<keyword id="KW-0444">Lipid biosynthesis</keyword>
<keyword id="KW-0443">Lipid metabolism</keyword>
<keyword id="KW-0456">Lyase</keyword>
<keyword id="KW-0472">Membrane</keyword>
<keyword id="KW-0594">Phospholipid biosynthesis</keyword>
<keyword id="KW-1208">Phospholipid metabolism</keyword>
<keyword id="KW-0670">Pyruvate</keyword>
<keyword id="KW-1185">Reference proteome</keyword>
<keyword id="KW-0865">Zymogen</keyword>
<comment type="function">
    <text evidence="1">Catalyzes the formation of phosphatidylethanolamine (PtdEtn) from phosphatidylserine (PtdSer).</text>
</comment>
<comment type="catalytic activity">
    <reaction evidence="1">
        <text>a 1,2-diacyl-sn-glycero-3-phospho-L-serine + H(+) = a 1,2-diacyl-sn-glycero-3-phosphoethanolamine + CO2</text>
        <dbReference type="Rhea" id="RHEA:20828"/>
        <dbReference type="ChEBI" id="CHEBI:15378"/>
        <dbReference type="ChEBI" id="CHEBI:16526"/>
        <dbReference type="ChEBI" id="CHEBI:57262"/>
        <dbReference type="ChEBI" id="CHEBI:64612"/>
        <dbReference type="EC" id="4.1.1.65"/>
    </reaction>
</comment>
<comment type="cofactor">
    <cofactor evidence="1">
        <name>pyruvate</name>
        <dbReference type="ChEBI" id="CHEBI:15361"/>
    </cofactor>
    <text evidence="1">Binds 1 pyruvoyl group covalently per subunit.</text>
</comment>
<comment type="pathway">
    <text evidence="1">Phospholipid metabolism; phosphatidylethanolamine biosynthesis; phosphatidylethanolamine from CDP-diacylglycerol: step 2/2.</text>
</comment>
<comment type="subunit">
    <text evidence="1">Heterodimer of a large membrane-associated beta subunit and a small pyruvoyl-containing alpha subunit.</text>
</comment>
<comment type="subcellular location">
    <subcellularLocation>
        <location evidence="1">Cell membrane</location>
        <topology evidence="1">Peripheral membrane protein</topology>
    </subcellularLocation>
</comment>
<comment type="PTM">
    <text evidence="1">Is synthesized initially as an inactive proenzyme. Formation of the active enzyme involves a self-maturation process in which the active site pyruvoyl group is generated from an internal serine residue via an autocatalytic post-translational modification. Two non-identical subunits are generated from the proenzyme in this reaction, and the pyruvate is formed at the N-terminus of the alpha chain, which is derived from the carboxyl end of the proenzyme. The autoendoproteolytic cleavage occurs by a canonical serine protease mechanism, in which the side chain hydroxyl group of the serine supplies its oxygen atom to form the C-terminus of the beta chain, while the remainder of the serine residue undergoes an oxidative deamination to produce ammonia and the pyruvoyl prosthetic group on the alpha chain. During this reaction, the Ser that is part of the protease active site of the proenzyme becomes the pyruvoyl prosthetic group, which constitutes an essential element of the active site of the mature decarboxylase.</text>
</comment>
<comment type="similarity">
    <text evidence="1">Belongs to the phosphatidylserine decarboxylase family. PSD-B subfamily. Prokaryotic type I sub-subfamily.</text>
</comment>
<gene>
    <name evidence="1" type="primary">psd</name>
    <name type="ordered locus">BCI_0587</name>
</gene>
<sequence>MLYIIKPFLQKLRYLLQLLLTQIVGWSAECHGSWFTRIIIKLFILFYKVNMQESLQQDIAFYKTFNAFFIRYLNKNARPINSNPSVIVQPADGIISQLGTIQDHLILQAKKHFYSLEALLAGQTRIINYFRCGNFTTIYLSPRDYHRVHMPCNGVLRQMIYVPGNLFSVNPSMVTHVPNLFARNERVICLFDSNFGLIAQILVGATIVGSIATIWSGTVMPPREKVIKCWHYPKFGDKNAVILLKGQEMGYFKLGSTVINLFRYGRIELCDHLYTNCITRVGLPLGYSNKKI</sequence>
<evidence type="ECO:0000255" key="1">
    <source>
        <dbReference type="HAMAP-Rule" id="MF_00662"/>
    </source>
</evidence>
<accession>Q1LSP9</accession>
<name>PSD_BAUCH</name>
<reference key="1">
    <citation type="journal article" date="2006" name="PLoS Biol.">
        <title>Metabolic complementarity and genomics of the dual bacterial symbiosis of sharpshooters.</title>
        <authorList>
            <person name="Wu D."/>
            <person name="Daugherty S.C."/>
            <person name="Van Aken S.E."/>
            <person name="Pai G.H."/>
            <person name="Watkins K.L."/>
            <person name="Khouri H."/>
            <person name="Tallon L.J."/>
            <person name="Zaborsky J.M."/>
            <person name="Dunbar H.E."/>
            <person name="Tran P.L."/>
            <person name="Moran N.A."/>
            <person name="Eisen J.A."/>
        </authorList>
    </citation>
    <scope>NUCLEOTIDE SEQUENCE [LARGE SCALE GENOMIC DNA]</scope>
</reference>
<feature type="chain" id="PRO_0000262093" description="Phosphatidylserine decarboxylase beta chain" evidence="1">
    <location>
        <begin position="1"/>
        <end position="255"/>
    </location>
</feature>
<feature type="chain" id="PRO_0000262094" description="Phosphatidylserine decarboxylase alpha chain" evidence="1">
    <location>
        <begin position="256"/>
        <end position="292"/>
    </location>
</feature>
<feature type="active site" description="Charge relay system; for autoendoproteolytic cleavage activity" evidence="1">
    <location>
        <position position="92"/>
    </location>
</feature>
<feature type="active site" description="Charge relay system; for autoendoproteolytic cleavage activity" evidence="1">
    <location>
        <position position="149"/>
    </location>
</feature>
<feature type="active site" description="Charge relay system; for autoendoproteolytic cleavage activity" evidence="1">
    <location>
        <position position="256"/>
    </location>
</feature>
<feature type="active site" description="Schiff-base intermediate with substrate; via pyruvic acid; for decarboxylase activity" evidence="1">
    <location>
        <position position="256"/>
    </location>
</feature>
<feature type="site" description="Cleavage (non-hydrolytic); by autocatalysis" evidence="1">
    <location>
        <begin position="255"/>
        <end position="256"/>
    </location>
</feature>
<feature type="modified residue" description="Pyruvic acid (Ser); by autocatalysis" evidence="1">
    <location>
        <position position="256"/>
    </location>
</feature>
<proteinExistence type="inferred from homology"/>
<dbReference type="EC" id="4.1.1.65" evidence="1"/>
<dbReference type="EMBL" id="CP000238">
    <property type="protein sequence ID" value="ABF13816.1"/>
    <property type="molecule type" value="Genomic_DNA"/>
</dbReference>
<dbReference type="RefSeq" id="WP_011520748.1">
    <property type="nucleotide sequence ID" value="NC_007984.1"/>
</dbReference>
<dbReference type="SMR" id="Q1LSP9"/>
<dbReference type="STRING" id="374463.BCI_0587"/>
<dbReference type="KEGG" id="bci:BCI_0587"/>
<dbReference type="HOGENOM" id="CLU_029061_4_1_6"/>
<dbReference type="OrthoDB" id="9802030at2"/>
<dbReference type="UniPathway" id="UPA00558">
    <property type="reaction ID" value="UER00616"/>
</dbReference>
<dbReference type="Proteomes" id="UP000002427">
    <property type="component" value="Chromosome"/>
</dbReference>
<dbReference type="GO" id="GO:0005886">
    <property type="term" value="C:plasma membrane"/>
    <property type="evidence" value="ECO:0007669"/>
    <property type="project" value="UniProtKB-SubCell"/>
</dbReference>
<dbReference type="GO" id="GO:0004609">
    <property type="term" value="F:phosphatidylserine decarboxylase activity"/>
    <property type="evidence" value="ECO:0007669"/>
    <property type="project" value="UniProtKB-UniRule"/>
</dbReference>
<dbReference type="GO" id="GO:0006646">
    <property type="term" value="P:phosphatidylethanolamine biosynthetic process"/>
    <property type="evidence" value="ECO:0007669"/>
    <property type="project" value="UniProtKB-UniRule"/>
</dbReference>
<dbReference type="HAMAP" id="MF_00662">
    <property type="entry name" value="PS_decarb_PSD_B_type1"/>
    <property type="match status" value="1"/>
</dbReference>
<dbReference type="InterPro" id="IPR003817">
    <property type="entry name" value="PS_Dcarbxylase"/>
</dbReference>
<dbReference type="InterPro" id="IPR033177">
    <property type="entry name" value="PSD-B"/>
</dbReference>
<dbReference type="InterPro" id="IPR033178">
    <property type="entry name" value="PSD_type1_pro"/>
</dbReference>
<dbReference type="NCBIfam" id="TIGR00163">
    <property type="entry name" value="PS_decarb"/>
    <property type="match status" value="1"/>
</dbReference>
<dbReference type="PANTHER" id="PTHR10067">
    <property type="entry name" value="PHOSPHATIDYLSERINE DECARBOXYLASE"/>
    <property type="match status" value="1"/>
</dbReference>
<dbReference type="PANTHER" id="PTHR10067:SF6">
    <property type="entry name" value="PHOSPHATIDYLSERINE DECARBOXYLASE PROENZYME, MITOCHONDRIAL"/>
    <property type="match status" value="1"/>
</dbReference>
<dbReference type="Pfam" id="PF02666">
    <property type="entry name" value="PS_Dcarbxylase"/>
    <property type="match status" value="1"/>
</dbReference>
<protein>
    <recommendedName>
        <fullName evidence="1">Phosphatidylserine decarboxylase proenzyme</fullName>
        <ecNumber evidence="1">4.1.1.65</ecNumber>
    </recommendedName>
    <component>
        <recommendedName>
            <fullName evidence="1">Phosphatidylserine decarboxylase alpha chain</fullName>
        </recommendedName>
    </component>
    <component>
        <recommendedName>
            <fullName evidence="1">Phosphatidylserine decarboxylase beta chain</fullName>
        </recommendedName>
    </component>
</protein>